<protein>
    <recommendedName>
        <fullName evidence="1">ATP synthase subunit beta</fullName>
        <ecNumber evidence="1">7.1.2.2</ecNumber>
    </recommendedName>
    <alternativeName>
        <fullName evidence="1">ATP synthase F1 sector subunit beta</fullName>
    </alternativeName>
    <alternativeName>
        <fullName evidence="1">F-ATPase subunit beta</fullName>
    </alternativeName>
</protein>
<comment type="function">
    <text evidence="1">Produces ATP from ADP in the presence of a proton gradient across the membrane. The catalytic sites are hosted primarily by the beta subunits.</text>
</comment>
<comment type="catalytic activity">
    <reaction evidence="1">
        <text>ATP + H2O + 4 H(+)(in) = ADP + phosphate + 5 H(+)(out)</text>
        <dbReference type="Rhea" id="RHEA:57720"/>
        <dbReference type="ChEBI" id="CHEBI:15377"/>
        <dbReference type="ChEBI" id="CHEBI:15378"/>
        <dbReference type="ChEBI" id="CHEBI:30616"/>
        <dbReference type="ChEBI" id="CHEBI:43474"/>
        <dbReference type="ChEBI" id="CHEBI:456216"/>
        <dbReference type="EC" id="7.1.2.2"/>
    </reaction>
</comment>
<comment type="subunit">
    <text evidence="1">F-type ATPases have 2 components, CF(1) - the catalytic core - and CF(0) - the membrane proton channel. CF(1) has five subunits: alpha(3), beta(3), gamma(1), delta(1), epsilon(1). CF(0) has three main subunits: a(1), b(2) and c(9-12). The alpha and beta chains form an alternating ring which encloses part of the gamma chain. CF(1) is attached to CF(0) by a central stalk formed by the gamma and epsilon chains, while a peripheral stalk is formed by the delta and b chains.</text>
</comment>
<comment type="subcellular location">
    <subcellularLocation>
        <location evidence="1">Cell inner membrane</location>
        <topology evidence="1">Peripheral membrane protein</topology>
    </subcellularLocation>
</comment>
<comment type="similarity">
    <text evidence="1">Belongs to the ATPase alpha/beta chains family.</text>
</comment>
<proteinExistence type="inferred from homology"/>
<organism>
    <name type="scientific">Hyphomonas neptunium (strain ATCC 15444)</name>
    <dbReference type="NCBI Taxonomy" id="228405"/>
    <lineage>
        <taxon>Bacteria</taxon>
        <taxon>Pseudomonadati</taxon>
        <taxon>Pseudomonadota</taxon>
        <taxon>Alphaproteobacteria</taxon>
        <taxon>Hyphomonadales</taxon>
        <taxon>Hyphomonadaceae</taxon>
        <taxon>Hyphomonas</taxon>
    </lineage>
</organism>
<feature type="chain" id="PRO_0000339534" description="ATP synthase subunit beta">
    <location>
        <begin position="1"/>
        <end position="475"/>
    </location>
</feature>
<feature type="binding site" evidence="1">
    <location>
        <begin position="154"/>
        <end position="161"/>
    </location>
    <ligand>
        <name>ATP</name>
        <dbReference type="ChEBI" id="CHEBI:30616"/>
    </ligand>
</feature>
<sequence>MSTPANGKGRISQVIGAVVDVEFDGELPSILNALETFNNGSRLVLEVAQHLGENTVRTIAMDSTEGLVRGQPVSDIGTPITVPVGPATLGRIMNVIGEPIDERGPVNADTYMPIHAQAPAFVDQATESEVLVTGIKVIDLLCPYAKGGKIGLFGGAGVGKTVLIMELVNNIAKLFGGYSVFAGVGERTREGNDLYHEMIESNVINLEGESRMSLVYGQMNEPPGARARVALTGLTQAEYFRDVEGKDVLFFVDNIFRFTQAGSEVSALLGRIPSAVGYQPTLATDMGALQERITSTNKGSITSVQAVYVPADDLTDPAPATSFAHLDATTVLNRAISEKGIYPAVDPLDSTSRILDPMVVGEEHYEVARGVQQILQKYKELQDIIAILGMDELSEDDKVTVARARKVERFLSQPFDVAQVFTGSPGVQVKLEDTIKGFKGLISGEFDHLPEPAFYMVGNIEEAKAKAAKLMADAA</sequence>
<evidence type="ECO:0000255" key="1">
    <source>
        <dbReference type="HAMAP-Rule" id="MF_01347"/>
    </source>
</evidence>
<keyword id="KW-0066">ATP synthesis</keyword>
<keyword id="KW-0067">ATP-binding</keyword>
<keyword id="KW-0997">Cell inner membrane</keyword>
<keyword id="KW-1003">Cell membrane</keyword>
<keyword id="KW-0139">CF(1)</keyword>
<keyword id="KW-0375">Hydrogen ion transport</keyword>
<keyword id="KW-0406">Ion transport</keyword>
<keyword id="KW-0472">Membrane</keyword>
<keyword id="KW-0547">Nucleotide-binding</keyword>
<keyword id="KW-1185">Reference proteome</keyword>
<keyword id="KW-1278">Translocase</keyword>
<keyword id="KW-0813">Transport</keyword>
<accession>Q0C100</accession>
<dbReference type="EC" id="7.1.2.2" evidence="1"/>
<dbReference type="EMBL" id="CP000158">
    <property type="protein sequence ID" value="ABI78817.1"/>
    <property type="molecule type" value="Genomic_DNA"/>
</dbReference>
<dbReference type="RefSeq" id="WP_011646893.1">
    <property type="nucleotide sequence ID" value="NC_008358.1"/>
</dbReference>
<dbReference type="SMR" id="Q0C100"/>
<dbReference type="STRING" id="228405.HNE_1892"/>
<dbReference type="KEGG" id="hne:HNE_1892"/>
<dbReference type="eggNOG" id="COG0055">
    <property type="taxonomic scope" value="Bacteria"/>
</dbReference>
<dbReference type="HOGENOM" id="CLU_022398_0_2_5"/>
<dbReference type="Proteomes" id="UP000001959">
    <property type="component" value="Chromosome"/>
</dbReference>
<dbReference type="GO" id="GO:0005886">
    <property type="term" value="C:plasma membrane"/>
    <property type="evidence" value="ECO:0007669"/>
    <property type="project" value="UniProtKB-SubCell"/>
</dbReference>
<dbReference type="GO" id="GO:0045259">
    <property type="term" value="C:proton-transporting ATP synthase complex"/>
    <property type="evidence" value="ECO:0007669"/>
    <property type="project" value="UniProtKB-KW"/>
</dbReference>
<dbReference type="GO" id="GO:0005524">
    <property type="term" value="F:ATP binding"/>
    <property type="evidence" value="ECO:0007669"/>
    <property type="project" value="UniProtKB-UniRule"/>
</dbReference>
<dbReference type="GO" id="GO:0016887">
    <property type="term" value="F:ATP hydrolysis activity"/>
    <property type="evidence" value="ECO:0007669"/>
    <property type="project" value="InterPro"/>
</dbReference>
<dbReference type="GO" id="GO:0046933">
    <property type="term" value="F:proton-transporting ATP synthase activity, rotational mechanism"/>
    <property type="evidence" value="ECO:0007669"/>
    <property type="project" value="UniProtKB-UniRule"/>
</dbReference>
<dbReference type="CDD" id="cd18110">
    <property type="entry name" value="ATP-synt_F1_beta_C"/>
    <property type="match status" value="1"/>
</dbReference>
<dbReference type="CDD" id="cd18115">
    <property type="entry name" value="ATP-synt_F1_beta_N"/>
    <property type="match status" value="1"/>
</dbReference>
<dbReference type="CDD" id="cd01133">
    <property type="entry name" value="F1-ATPase_beta_CD"/>
    <property type="match status" value="1"/>
</dbReference>
<dbReference type="FunFam" id="1.10.1140.10:FF:000001">
    <property type="entry name" value="ATP synthase subunit beta"/>
    <property type="match status" value="1"/>
</dbReference>
<dbReference type="FunFam" id="2.40.10.170:FF:000005">
    <property type="entry name" value="ATP synthase subunit beta"/>
    <property type="match status" value="1"/>
</dbReference>
<dbReference type="FunFam" id="3.40.50.300:FF:000026">
    <property type="entry name" value="ATP synthase subunit beta"/>
    <property type="match status" value="1"/>
</dbReference>
<dbReference type="Gene3D" id="2.40.10.170">
    <property type="match status" value="1"/>
</dbReference>
<dbReference type="Gene3D" id="1.10.1140.10">
    <property type="entry name" value="Bovine Mitochondrial F1-atpase, Atp Synthase Beta Chain, Chain D, domain 3"/>
    <property type="match status" value="1"/>
</dbReference>
<dbReference type="Gene3D" id="3.40.50.300">
    <property type="entry name" value="P-loop containing nucleotide triphosphate hydrolases"/>
    <property type="match status" value="1"/>
</dbReference>
<dbReference type="HAMAP" id="MF_01347">
    <property type="entry name" value="ATP_synth_beta_bact"/>
    <property type="match status" value="1"/>
</dbReference>
<dbReference type="InterPro" id="IPR003593">
    <property type="entry name" value="AAA+_ATPase"/>
</dbReference>
<dbReference type="InterPro" id="IPR055190">
    <property type="entry name" value="ATP-synt_VA_C"/>
</dbReference>
<dbReference type="InterPro" id="IPR005722">
    <property type="entry name" value="ATP_synth_F1_bsu"/>
</dbReference>
<dbReference type="InterPro" id="IPR020003">
    <property type="entry name" value="ATPase_a/bsu_AS"/>
</dbReference>
<dbReference type="InterPro" id="IPR050053">
    <property type="entry name" value="ATPase_alpha/beta_chains"/>
</dbReference>
<dbReference type="InterPro" id="IPR004100">
    <property type="entry name" value="ATPase_F1/V1/A1_a/bsu_N"/>
</dbReference>
<dbReference type="InterPro" id="IPR036121">
    <property type="entry name" value="ATPase_F1/V1/A1_a/bsu_N_sf"/>
</dbReference>
<dbReference type="InterPro" id="IPR000194">
    <property type="entry name" value="ATPase_F1/V1/A1_a/bsu_nucl-bd"/>
</dbReference>
<dbReference type="InterPro" id="IPR024034">
    <property type="entry name" value="ATPase_F1/V1_b/a_C"/>
</dbReference>
<dbReference type="InterPro" id="IPR027417">
    <property type="entry name" value="P-loop_NTPase"/>
</dbReference>
<dbReference type="NCBIfam" id="TIGR01039">
    <property type="entry name" value="atpD"/>
    <property type="match status" value="1"/>
</dbReference>
<dbReference type="PANTHER" id="PTHR15184">
    <property type="entry name" value="ATP SYNTHASE"/>
    <property type="match status" value="1"/>
</dbReference>
<dbReference type="PANTHER" id="PTHR15184:SF71">
    <property type="entry name" value="ATP SYNTHASE SUBUNIT BETA, MITOCHONDRIAL"/>
    <property type="match status" value="1"/>
</dbReference>
<dbReference type="Pfam" id="PF00006">
    <property type="entry name" value="ATP-synt_ab"/>
    <property type="match status" value="1"/>
</dbReference>
<dbReference type="Pfam" id="PF02874">
    <property type="entry name" value="ATP-synt_ab_N"/>
    <property type="match status" value="1"/>
</dbReference>
<dbReference type="Pfam" id="PF22919">
    <property type="entry name" value="ATP-synt_VA_C"/>
    <property type="match status" value="1"/>
</dbReference>
<dbReference type="PIRSF" id="PIRSF039072">
    <property type="entry name" value="ATPase_subunit_beta"/>
    <property type="match status" value="1"/>
</dbReference>
<dbReference type="SMART" id="SM00382">
    <property type="entry name" value="AAA"/>
    <property type="match status" value="1"/>
</dbReference>
<dbReference type="SUPFAM" id="SSF47917">
    <property type="entry name" value="C-terminal domain of alpha and beta subunits of F1 ATP synthase"/>
    <property type="match status" value="1"/>
</dbReference>
<dbReference type="SUPFAM" id="SSF50615">
    <property type="entry name" value="N-terminal domain of alpha and beta subunits of F1 ATP synthase"/>
    <property type="match status" value="1"/>
</dbReference>
<dbReference type="SUPFAM" id="SSF52540">
    <property type="entry name" value="P-loop containing nucleoside triphosphate hydrolases"/>
    <property type="match status" value="1"/>
</dbReference>
<dbReference type="PROSITE" id="PS00152">
    <property type="entry name" value="ATPASE_ALPHA_BETA"/>
    <property type="match status" value="1"/>
</dbReference>
<gene>
    <name evidence="1" type="primary">atpD</name>
    <name type="ordered locus">HNE_1892</name>
</gene>
<name>ATPB_HYPNA</name>
<reference key="1">
    <citation type="journal article" date="2006" name="J. Bacteriol.">
        <title>Comparative genomic evidence for a close relationship between the dimorphic prosthecate bacteria Hyphomonas neptunium and Caulobacter crescentus.</title>
        <authorList>
            <person name="Badger J.H."/>
            <person name="Hoover T.R."/>
            <person name="Brun Y.V."/>
            <person name="Weiner R.M."/>
            <person name="Laub M.T."/>
            <person name="Alexandre G."/>
            <person name="Mrazek J."/>
            <person name="Ren Q."/>
            <person name="Paulsen I.T."/>
            <person name="Nelson K.E."/>
            <person name="Khouri H.M."/>
            <person name="Radune D."/>
            <person name="Sosa J."/>
            <person name="Dodson R.J."/>
            <person name="Sullivan S.A."/>
            <person name="Rosovitz M.J."/>
            <person name="Madupu R."/>
            <person name="Brinkac L.M."/>
            <person name="Durkin A.S."/>
            <person name="Daugherty S.C."/>
            <person name="Kothari S.P."/>
            <person name="Giglio M.G."/>
            <person name="Zhou L."/>
            <person name="Haft D.H."/>
            <person name="Selengut J.D."/>
            <person name="Davidsen T.M."/>
            <person name="Yang Q."/>
            <person name="Zafar N."/>
            <person name="Ward N.L."/>
        </authorList>
    </citation>
    <scope>NUCLEOTIDE SEQUENCE [LARGE SCALE GENOMIC DNA]</scope>
    <source>
        <strain>ATCC 15444</strain>
    </source>
</reference>